<dbReference type="EC" id="6.1.1.10" evidence="1"/>
<dbReference type="EMBL" id="CP000300">
    <property type="protein sequence ID" value="ABE52817.1"/>
    <property type="molecule type" value="Genomic_DNA"/>
</dbReference>
<dbReference type="RefSeq" id="WP_011499959.1">
    <property type="nucleotide sequence ID" value="NC_007955.1"/>
</dbReference>
<dbReference type="SMR" id="Q12UQ9"/>
<dbReference type="STRING" id="259564.Mbur_1936"/>
<dbReference type="GeneID" id="3997837"/>
<dbReference type="KEGG" id="mbu:Mbur_1936"/>
<dbReference type="HOGENOM" id="CLU_009710_7_0_2"/>
<dbReference type="OrthoDB" id="371856at2157"/>
<dbReference type="Proteomes" id="UP000001979">
    <property type="component" value="Chromosome"/>
</dbReference>
<dbReference type="GO" id="GO:0017101">
    <property type="term" value="C:aminoacyl-tRNA synthetase multienzyme complex"/>
    <property type="evidence" value="ECO:0007669"/>
    <property type="project" value="TreeGrafter"/>
</dbReference>
<dbReference type="GO" id="GO:0005829">
    <property type="term" value="C:cytosol"/>
    <property type="evidence" value="ECO:0007669"/>
    <property type="project" value="TreeGrafter"/>
</dbReference>
<dbReference type="GO" id="GO:0005524">
    <property type="term" value="F:ATP binding"/>
    <property type="evidence" value="ECO:0007669"/>
    <property type="project" value="UniProtKB-UniRule"/>
</dbReference>
<dbReference type="GO" id="GO:0046872">
    <property type="term" value="F:metal ion binding"/>
    <property type="evidence" value="ECO:0007669"/>
    <property type="project" value="UniProtKB-KW"/>
</dbReference>
<dbReference type="GO" id="GO:0004825">
    <property type="term" value="F:methionine-tRNA ligase activity"/>
    <property type="evidence" value="ECO:0007669"/>
    <property type="project" value="UniProtKB-UniRule"/>
</dbReference>
<dbReference type="GO" id="GO:0000049">
    <property type="term" value="F:tRNA binding"/>
    <property type="evidence" value="ECO:0007669"/>
    <property type="project" value="UniProtKB-KW"/>
</dbReference>
<dbReference type="GO" id="GO:0006431">
    <property type="term" value="P:methionyl-tRNA aminoacylation"/>
    <property type="evidence" value="ECO:0007669"/>
    <property type="project" value="UniProtKB-UniRule"/>
</dbReference>
<dbReference type="CDD" id="cd07957">
    <property type="entry name" value="Anticodon_Ia_Met"/>
    <property type="match status" value="1"/>
</dbReference>
<dbReference type="CDD" id="cd00814">
    <property type="entry name" value="MetRS_core"/>
    <property type="match status" value="1"/>
</dbReference>
<dbReference type="CDD" id="cd02800">
    <property type="entry name" value="tRNA_bind_EcMetRS_like"/>
    <property type="match status" value="1"/>
</dbReference>
<dbReference type="FunFam" id="2.20.28.20:FF:000001">
    <property type="entry name" value="Methionine--tRNA ligase"/>
    <property type="match status" value="1"/>
</dbReference>
<dbReference type="FunFam" id="2.40.50.140:FF:000042">
    <property type="entry name" value="Methionine--tRNA ligase"/>
    <property type="match status" value="1"/>
</dbReference>
<dbReference type="Gene3D" id="3.40.50.620">
    <property type="entry name" value="HUPs"/>
    <property type="match status" value="1"/>
</dbReference>
<dbReference type="Gene3D" id="1.10.730.10">
    <property type="entry name" value="Isoleucyl-tRNA Synthetase, Domain 1"/>
    <property type="match status" value="1"/>
</dbReference>
<dbReference type="Gene3D" id="2.20.28.20">
    <property type="entry name" value="Methionyl-tRNA synthetase, Zn-domain"/>
    <property type="match status" value="1"/>
</dbReference>
<dbReference type="Gene3D" id="2.40.50.140">
    <property type="entry name" value="Nucleic acid-binding proteins"/>
    <property type="match status" value="1"/>
</dbReference>
<dbReference type="HAMAP" id="MF_00098">
    <property type="entry name" value="Met_tRNA_synth_type1"/>
    <property type="match status" value="1"/>
</dbReference>
<dbReference type="InterPro" id="IPR041872">
    <property type="entry name" value="Anticodon_Met"/>
</dbReference>
<dbReference type="InterPro" id="IPR004495">
    <property type="entry name" value="Met-tRNA-synth_bsu_C"/>
</dbReference>
<dbReference type="InterPro" id="IPR023458">
    <property type="entry name" value="Met-tRNA_ligase_1"/>
</dbReference>
<dbReference type="InterPro" id="IPR014758">
    <property type="entry name" value="Met-tRNA_synth"/>
</dbReference>
<dbReference type="InterPro" id="IPR015413">
    <property type="entry name" value="Methionyl/Leucyl_tRNA_Synth"/>
</dbReference>
<dbReference type="InterPro" id="IPR033911">
    <property type="entry name" value="MetRS_core"/>
</dbReference>
<dbReference type="InterPro" id="IPR029038">
    <property type="entry name" value="MetRS_Zn"/>
</dbReference>
<dbReference type="InterPro" id="IPR012340">
    <property type="entry name" value="NA-bd_OB-fold"/>
</dbReference>
<dbReference type="InterPro" id="IPR014729">
    <property type="entry name" value="Rossmann-like_a/b/a_fold"/>
</dbReference>
<dbReference type="InterPro" id="IPR002547">
    <property type="entry name" value="tRNA-bd_dom"/>
</dbReference>
<dbReference type="InterPro" id="IPR009080">
    <property type="entry name" value="tRNAsynth_Ia_anticodon-bd"/>
</dbReference>
<dbReference type="NCBIfam" id="TIGR00398">
    <property type="entry name" value="metG"/>
    <property type="match status" value="1"/>
</dbReference>
<dbReference type="NCBIfam" id="TIGR00399">
    <property type="entry name" value="metG_C_term"/>
    <property type="match status" value="1"/>
</dbReference>
<dbReference type="NCBIfam" id="NF001100">
    <property type="entry name" value="PRK00133.1"/>
    <property type="match status" value="1"/>
</dbReference>
<dbReference type="PANTHER" id="PTHR45765">
    <property type="entry name" value="METHIONINE--TRNA LIGASE"/>
    <property type="match status" value="1"/>
</dbReference>
<dbReference type="PANTHER" id="PTHR45765:SF1">
    <property type="entry name" value="METHIONINE--TRNA LIGASE, CYTOPLASMIC"/>
    <property type="match status" value="1"/>
</dbReference>
<dbReference type="Pfam" id="PF19303">
    <property type="entry name" value="Anticodon_3"/>
    <property type="match status" value="1"/>
</dbReference>
<dbReference type="Pfam" id="PF09334">
    <property type="entry name" value="tRNA-synt_1g"/>
    <property type="match status" value="1"/>
</dbReference>
<dbReference type="Pfam" id="PF01588">
    <property type="entry name" value="tRNA_bind"/>
    <property type="match status" value="1"/>
</dbReference>
<dbReference type="PRINTS" id="PR01041">
    <property type="entry name" value="TRNASYNTHMET"/>
</dbReference>
<dbReference type="SUPFAM" id="SSF47323">
    <property type="entry name" value="Anticodon-binding domain of a subclass of class I aminoacyl-tRNA synthetases"/>
    <property type="match status" value="1"/>
</dbReference>
<dbReference type="SUPFAM" id="SSF57770">
    <property type="entry name" value="Methionyl-tRNA synthetase (MetRS), Zn-domain"/>
    <property type="match status" value="1"/>
</dbReference>
<dbReference type="SUPFAM" id="SSF50249">
    <property type="entry name" value="Nucleic acid-binding proteins"/>
    <property type="match status" value="1"/>
</dbReference>
<dbReference type="SUPFAM" id="SSF52374">
    <property type="entry name" value="Nucleotidylyl transferase"/>
    <property type="match status" value="1"/>
</dbReference>
<dbReference type="PROSITE" id="PS50886">
    <property type="entry name" value="TRBD"/>
    <property type="match status" value="1"/>
</dbReference>
<name>SYM_METBU</name>
<sequence>MSKFPSEKPVLVTCGLPYANGKAHVGHLRTYVPADIFTRSLKKTGQEVTFVCGSDTHGTPIVFNAEELKTTPTEIIKVYHKHFDEIFKKMGVMLDAFGTTDDPTNHNRTTEIVSKLIENGYVYPKTIEIAYCPSCDRSLPDRYVKGTCPHCKKEARGDECDQGCGKHLEPGELEHPACTTCNGPAEYKQQEHFFFKLSQFKDFLLEYLEGLGGTLNARNYALGWVKQELTDWCITRSLDWGIKFPGHEDLVVYVWVDAPIGYIAFTEEWAEANNESWEKFWKDDGSIIHFIGGDIIYHHCIFWPAMLKGAGYNQPDAVVASGMVKIEDRTFSKSRGYVVWVDEDYLDHGFHQDLLRYYLASYTSHTKELNFSWKVFQDKVNTELVGVFGNFLYRTLLFTHKNFGEIPEGEVKQDILDEINTTIENAKEAMENYEFKKYADTVMALASYGNTYFQSNEPWKLIKENKEACGEIVKNCAQITKALCLLFEPILPEKMEEAWKQIGMETDVHETNYMEATELVKSGTTLEKPSILFEKIEDEKTEEMEAISAARVKEAIAKENGTEEVEEVKEIEEMKDLITFDDFSKLDIRIGTIVSAEAIKKSKKLLKLQVDLGEEETRQIVAGLKESHEPEQLIGKQVAVLTNLAPAKLCGVESNGMVLAGVDAADNAILLQPEKETNPGTCIH</sequence>
<keyword id="KW-0030">Aminoacyl-tRNA synthetase</keyword>
<keyword id="KW-0067">ATP-binding</keyword>
<keyword id="KW-0963">Cytoplasm</keyword>
<keyword id="KW-0436">Ligase</keyword>
<keyword id="KW-0479">Metal-binding</keyword>
<keyword id="KW-0547">Nucleotide-binding</keyword>
<keyword id="KW-0648">Protein biosynthesis</keyword>
<keyword id="KW-0694">RNA-binding</keyword>
<keyword id="KW-0820">tRNA-binding</keyword>
<keyword id="KW-0862">Zinc</keyword>
<evidence type="ECO:0000255" key="1">
    <source>
        <dbReference type="HAMAP-Rule" id="MF_00098"/>
    </source>
</evidence>
<comment type="function">
    <text evidence="1">Is required not only for elongation of protein synthesis but also for the initiation of all mRNA translation through initiator tRNA(fMet) aminoacylation.</text>
</comment>
<comment type="catalytic activity">
    <reaction evidence="1">
        <text>tRNA(Met) + L-methionine + ATP = L-methionyl-tRNA(Met) + AMP + diphosphate</text>
        <dbReference type="Rhea" id="RHEA:13481"/>
        <dbReference type="Rhea" id="RHEA-COMP:9667"/>
        <dbReference type="Rhea" id="RHEA-COMP:9698"/>
        <dbReference type="ChEBI" id="CHEBI:30616"/>
        <dbReference type="ChEBI" id="CHEBI:33019"/>
        <dbReference type="ChEBI" id="CHEBI:57844"/>
        <dbReference type="ChEBI" id="CHEBI:78442"/>
        <dbReference type="ChEBI" id="CHEBI:78530"/>
        <dbReference type="ChEBI" id="CHEBI:456215"/>
        <dbReference type="EC" id="6.1.1.10"/>
    </reaction>
</comment>
<comment type="cofactor">
    <cofactor evidence="1">
        <name>Zn(2+)</name>
        <dbReference type="ChEBI" id="CHEBI:29105"/>
    </cofactor>
    <text evidence="1">Binds 1 zinc ion per subunit.</text>
</comment>
<comment type="subunit">
    <text evidence="1">Homodimer.</text>
</comment>
<comment type="subcellular location">
    <subcellularLocation>
        <location evidence="1">Cytoplasm</location>
    </subcellularLocation>
</comment>
<comment type="similarity">
    <text evidence="1">Belongs to the class-I aminoacyl-tRNA synthetase family. MetG type 1 subfamily.</text>
</comment>
<proteinExistence type="inferred from homology"/>
<reference key="1">
    <citation type="journal article" date="2009" name="ISME J.">
        <title>The genome sequence of the psychrophilic archaeon, Methanococcoides burtonii: the role of genome evolution in cold adaptation.</title>
        <authorList>
            <person name="Allen M.A."/>
            <person name="Lauro F.M."/>
            <person name="Williams T.J."/>
            <person name="Burg D."/>
            <person name="Siddiqui K.S."/>
            <person name="De Francisci D."/>
            <person name="Chong K.W."/>
            <person name="Pilak O."/>
            <person name="Chew H.H."/>
            <person name="De Maere M.Z."/>
            <person name="Ting L."/>
            <person name="Katrib M."/>
            <person name="Ng C."/>
            <person name="Sowers K.R."/>
            <person name="Galperin M.Y."/>
            <person name="Anderson I.J."/>
            <person name="Ivanova N."/>
            <person name="Dalin E."/>
            <person name="Martinez M."/>
            <person name="Lapidus A."/>
            <person name="Hauser L."/>
            <person name="Land M."/>
            <person name="Thomas T."/>
            <person name="Cavicchioli R."/>
        </authorList>
    </citation>
    <scope>NUCLEOTIDE SEQUENCE [LARGE SCALE GENOMIC DNA]</scope>
    <source>
        <strain>DSM 6242 / NBRC 107633 / OCM 468 / ACE-M</strain>
    </source>
</reference>
<gene>
    <name evidence="1" type="primary">metG</name>
    <name type="ordered locus">Mbur_1936</name>
</gene>
<organism>
    <name type="scientific">Methanococcoides burtonii (strain DSM 6242 / NBRC 107633 / OCM 468 / ACE-M)</name>
    <dbReference type="NCBI Taxonomy" id="259564"/>
    <lineage>
        <taxon>Archaea</taxon>
        <taxon>Methanobacteriati</taxon>
        <taxon>Methanobacteriota</taxon>
        <taxon>Stenosarchaea group</taxon>
        <taxon>Methanomicrobia</taxon>
        <taxon>Methanosarcinales</taxon>
        <taxon>Methanosarcinaceae</taxon>
        <taxon>Methanococcoides</taxon>
    </lineage>
</organism>
<accession>Q12UQ9</accession>
<feature type="chain" id="PRO_0000331940" description="Methionine--tRNA ligase">
    <location>
        <begin position="1"/>
        <end position="684"/>
    </location>
</feature>
<feature type="domain" description="tRNA-binding" evidence="1">
    <location>
        <begin position="582"/>
        <end position="684"/>
    </location>
</feature>
<feature type="short sequence motif" description="'HIGH' region">
    <location>
        <begin position="17"/>
        <end position="27"/>
    </location>
</feature>
<feature type="short sequence motif" description="'KMSKS' region">
    <location>
        <begin position="330"/>
        <end position="334"/>
    </location>
</feature>
<feature type="binding site" evidence="1">
    <location>
        <position position="148"/>
    </location>
    <ligand>
        <name>Zn(2+)</name>
        <dbReference type="ChEBI" id="CHEBI:29105"/>
    </ligand>
</feature>
<feature type="binding site" evidence="1">
    <location>
        <position position="151"/>
    </location>
    <ligand>
        <name>Zn(2+)</name>
        <dbReference type="ChEBI" id="CHEBI:29105"/>
    </ligand>
</feature>
<feature type="binding site" evidence="1">
    <location>
        <position position="160"/>
    </location>
    <ligand>
        <name>Zn(2+)</name>
        <dbReference type="ChEBI" id="CHEBI:29105"/>
    </ligand>
</feature>
<feature type="binding site" evidence="1">
    <location>
        <position position="164"/>
    </location>
    <ligand>
        <name>Zn(2+)</name>
        <dbReference type="ChEBI" id="CHEBI:29105"/>
    </ligand>
</feature>
<feature type="binding site" evidence="1">
    <location>
        <position position="333"/>
    </location>
    <ligand>
        <name>ATP</name>
        <dbReference type="ChEBI" id="CHEBI:30616"/>
    </ligand>
</feature>
<protein>
    <recommendedName>
        <fullName evidence="1">Methionine--tRNA ligase</fullName>
        <ecNumber evidence="1">6.1.1.10</ecNumber>
    </recommendedName>
    <alternativeName>
        <fullName evidence="1">Methionyl-tRNA synthetase</fullName>
        <shortName evidence="1">MetRS</shortName>
    </alternativeName>
</protein>